<gene>
    <name type="primary">54</name>
</gene>
<protein>
    <recommendedName>
        <fullName evidence="2">SAR-endolysin</fullName>
        <ecNumber evidence="2">3.2.1.17</ecNumber>
    </recommendedName>
    <alternativeName>
        <fullName evidence="2">Endolysin</fullName>
    </alternativeName>
    <alternativeName>
        <fullName>Gene product 54</fullName>
        <shortName>gp54</shortName>
    </alternativeName>
    <alternativeName>
        <fullName evidence="2">Lysis protein</fullName>
    </alternativeName>
    <alternativeName>
        <fullName evidence="2">Lysozyme</fullName>
    </alternativeName>
    <alternativeName>
        <fullName evidence="2">Muramidase</fullName>
    </alternativeName>
</protein>
<evidence type="ECO:0000255" key="1"/>
<evidence type="ECO:0000255" key="2">
    <source>
        <dbReference type="HAMAP-Rule" id="MF_04136"/>
    </source>
</evidence>
<name>ENLYS_BPN15</name>
<proteinExistence type="inferred from homology"/>
<comment type="function">
    <text evidence="2">Signal-arrest-release (SAR) endolysin with lysozyme activity that degrades host peptidoglycans and participates with the pinholin and spanin proteins in the sequential events which lead to programmed host cell lysis releasing the mature viral particles. Once the pinholin has permeabilized the host cell membrane, the SAR-endolysin is released into the periplasm where it breaks down the peptidoglycan layer.</text>
</comment>
<comment type="catalytic activity">
    <reaction evidence="2">
        <text>Hydrolysis of (1-&gt;4)-beta-linkages between N-acetylmuramic acid and N-acetyl-D-glucosamine residues in a peptidoglycan and between N-acetyl-D-glucosamine residues in chitodextrins.</text>
        <dbReference type="EC" id="3.2.1.17"/>
    </reaction>
</comment>
<comment type="subcellular location">
    <subcellularLocation>
        <location evidence="2">Host cell inner membrane</location>
        <topology evidence="2">Single-pass type II membrane protein</topology>
        <orientation evidence="2">Periplasmic side</orientation>
    </subcellularLocation>
    <text evidence="2">Secreted as a signal-anchored, membrane-tethered, inactive endolysin which is subsequently refolded, activated and released by membrane depolarization driven by the pinholin.</text>
</comment>
<comment type="domain">
    <text evidence="2">The signal-anchor, which may also be an uncleaved signal sequence tethers the SAR-endolysin to the membrane until the latter is depolarized by the holin, resulting in the escape of SAR-endolysin from the membrane.</text>
</comment>
<comment type="similarity">
    <text evidence="2">Belongs to the glycosyl hydrolase 24 family.</text>
</comment>
<accession>O64362</accession>
<reference key="1">
    <citation type="journal article" date="2000" name="J. Mol. Biol.">
        <title>Genomic sequence and analysis of the atypical temperate bacteriophage N15.</title>
        <authorList>
            <person name="Ravin V."/>
            <person name="Ravin N."/>
            <person name="Casjens S."/>
            <person name="Ford M.E."/>
            <person name="Hatfull G.F."/>
            <person name="Hendrix R.W."/>
        </authorList>
    </citation>
    <scope>NUCLEOTIDE SEQUENCE [GENOMIC DNA]</scope>
</reference>
<keyword id="KW-0929">Antimicrobial</keyword>
<keyword id="KW-0081">Bacteriolytic enzyme</keyword>
<keyword id="KW-0204">Cytolysis</keyword>
<keyword id="KW-0326">Glycosidase</keyword>
<keyword id="KW-1030">Host cell inner membrane</keyword>
<keyword id="KW-0578">Host cell lysis by virus</keyword>
<keyword id="KW-1032">Host cell membrane</keyword>
<keyword id="KW-1043">Host membrane</keyword>
<keyword id="KW-0378">Hydrolase</keyword>
<keyword id="KW-0472">Membrane</keyword>
<keyword id="KW-1185">Reference proteome</keyword>
<keyword id="KW-0735">Signal-anchor</keyword>
<keyword id="KW-0812">Transmembrane</keyword>
<keyword id="KW-1133">Transmembrane helix</keyword>
<keyword id="KW-1188">Viral release from host cell</keyword>
<dbReference type="EC" id="3.2.1.17" evidence="2"/>
<dbReference type="EMBL" id="AF064539">
    <property type="protein sequence ID" value="AAC19069.1"/>
    <property type="molecule type" value="Genomic_DNA"/>
</dbReference>
<dbReference type="PIR" id="T13141">
    <property type="entry name" value="T13141"/>
</dbReference>
<dbReference type="SMR" id="O64362"/>
<dbReference type="CAZy" id="GH24">
    <property type="family name" value="Glycoside Hydrolase Family 24"/>
</dbReference>
<dbReference type="KEGG" id="vg:1261692"/>
<dbReference type="Proteomes" id="UP000002132">
    <property type="component" value="Genome"/>
</dbReference>
<dbReference type="GO" id="GO:0020002">
    <property type="term" value="C:host cell plasma membrane"/>
    <property type="evidence" value="ECO:0007669"/>
    <property type="project" value="UniProtKB-SubCell"/>
</dbReference>
<dbReference type="GO" id="GO:0016020">
    <property type="term" value="C:membrane"/>
    <property type="evidence" value="ECO:0007669"/>
    <property type="project" value="UniProtKB-KW"/>
</dbReference>
<dbReference type="GO" id="GO:0003796">
    <property type="term" value="F:lysozyme activity"/>
    <property type="evidence" value="ECO:0007669"/>
    <property type="project" value="UniProtKB-EC"/>
</dbReference>
<dbReference type="GO" id="GO:0016998">
    <property type="term" value="P:cell wall macromolecule catabolic process"/>
    <property type="evidence" value="ECO:0007669"/>
    <property type="project" value="InterPro"/>
</dbReference>
<dbReference type="GO" id="GO:0042742">
    <property type="term" value="P:defense response to bacterium"/>
    <property type="evidence" value="ECO:0007669"/>
    <property type="project" value="UniProtKB-KW"/>
</dbReference>
<dbReference type="GO" id="GO:0031640">
    <property type="term" value="P:killing of cells of another organism"/>
    <property type="evidence" value="ECO:0007669"/>
    <property type="project" value="UniProtKB-KW"/>
</dbReference>
<dbReference type="GO" id="GO:0009253">
    <property type="term" value="P:peptidoglycan catabolic process"/>
    <property type="evidence" value="ECO:0007669"/>
    <property type="project" value="InterPro"/>
</dbReference>
<dbReference type="CDD" id="cd16900">
    <property type="entry name" value="endolysin_R21-like"/>
    <property type="match status" value="1"/>
</dbReference>
<dbReference type="Gene3D" id="1.10.530.40">
    <property type="match status" value="1"/>
</dbReference>
<dbReference type="HAMAP" id="MF_04110">
    <property type="entry name" value="ENDOLYSIN_T4"/>
    <property type="match status" value="1"/>
</dbReference>
<dbReference type="HAMAP" id="MF_04136">
    <property type="entry name" value="SAR_ENDOLYSIN"/>
    <property type="match status" value="1"/>
</dbReference>
<dbReference type="InterPro" id="IPR051018">
    <property type="entry name" value="Bacteriophage_GH24"/>
</dbReference>
<dbReference type="InterPro" id="IPR034690">
    <property type="entry name" value="Endolysin_T4_type"/>
</dbReference>
<dbReference type="InterPro" id="IPR002196">
    <property type="entry name" value="Glyco_hydro_24"/>
</dbReference>
<dbReference type="InterPro" id="IPR023346">
    <property type="entry name" value="Lysozyme-like_dom_sf"/>
</dbReference>
<dbReference type="InterPro" id="IPR023347">
    <property type="entry name" value="Lysozyme_dom_sf"/>
</dbReference>
<dbReference type="InterPro" id="IPR043688">
    <property type="entry name" value="SAR_endolysin-like"/>
</dbReference>
<dbReference type="PANTHER" id="PTHR38107">
    <property type="match status" value="1"/>
</dbReference>
<dbReference type="PANTHER" id="PTHR38107:SF3">
    <property type="entry name" value="LYSOZYME RRRD-RELATED"/>
    <property type="match status" value="1"/>
</dbReference>
<dbReference type="Pfam" id="PF00959">
    <property type="entry name" value="Phage_lysozyme"/>
    <property type="match status" value="1"/>
</dbReference>
<dbReference type="SUPFAM" id="SSF53955">
    <property type="entry name" value="Lysozyme-like"/>
    <property type="match status" value="1"/>
</dbReference>
<sequence>MANRAKLSAAVLSLILAGASAPQILDQFLDEKEGNSLTAYKDGSGIWTICRGATMVDGKPVMQGMKLTQAKCNQVNAIERNKALAWVDRNIKVPLTEPQKAGIASFCPYNIGPGKCFPSTFYKRLNAGDRHGACEAIRWWIKDGGRDCRLTKGQKNGCYGQVERRDQESALTCWEIDQ</sequence>
<organismHost>
    <name type="scientific">Escherichia coli</name>
    <dbReference type="NCBI Taxonomy" id="562"/>
</organismHost>
<feature type="chain" id="PRO_0000218097" description="SAR-endolysin">
    <location>
        <begin position="1"/>
        <end position="178"/>
    </location>
</feature>
<feature type="transmembrane region" description="Helical; Signal-anchor for type II membrane protein" evidence="1">
    <location>
        <begin position="1"/>
        <end position="22"/>
    </location>
</feature>
<feature type="active site" description="Proton donor/acceptor" evidence="2">
    <location>
        <position position="33"/>
    </location>
</feature>
<feature type="active site" description="Proton donor/acceptor" evidence="2">
    <location>
        <position position="42"/>
    </location>
</feature>
<organism>
    <name type="scientific">Escherichia phage N15</name>
    <name type="common">Bacteriophage N15</name>
    <dbReference type="NCBI Taxonomy" id="1604876"/>
    <lineage>
        <taxon>Viruses</taxon>
        <taxon>Duplodnaviria</taxon>
        <taxon>Heunggongvirae</taxon>
        <taxon>Uroviricota</taxon>
        <taxon>Caudoviricetes</taxon>
        <taxon>Ravinvirus</taxon>
        <taxon>Ravinvirus N15</taxon>
    </lineage>
</organism>